<evidence type="ECO:0000255" key="1">
    <source>
        <dbReference type="HAMAP-Rule" id="MF_01343"/>
    </source>
</evidence>
<evidence type="ECO:0000305" key="2"/>
<gene>
    <name evidence="1" type="primary">rpsO</name>
    <name type="ordered locus">DICTH_1017</name>
</gene>
<dbReference type="EMBL" id="CP001146">
    <property type="protein sequence ID" value="ACI19499.1"/>
    <property type="molecule type" value="Genomic_DNA"/>
</dbReference>
<dbReference type="RefSeq" id="WP_012548131.1">
    <property type="nucleotide sequence ID" value="NC_011297.1"/>
</dbReference>
<dbReference type="SMR" id="B5YEA9"/>
<dbReference type="STRING" id="309799.DICTH_1017"/>
<dbReference type="PaxDb" id="309799-DICTH_1017"/>
<dbReference type="KEGG" id="dth:DICTH_1017"/>
<dbReference type="eggNOG" id="COG0184">
    <property type="taxonomic scope" value="Bacteria"/>
</dbReference>
<dbReference type="HOGENOM" id="CLU_148518_0_0_0"/>
<dbReference type="OrthoDB" id="9799262at2"/>
<dbReference type="Proteomes" id="UP000001733">
    <property type="component" value="Chromosome"/>
</dbReference>
<dbReference type="GO" id="GO:0022627">
    <property type="term" value="C:cytosolic small ribosomal subunit"/>
    <property type="evidence" value="ECO:0007669"/>
    <property type="project" value="TreeGrafter"/>
</dbReference>
<dbReference type="GO" id="GO:0019843">
    <property type="term" value="F:rRNA binding"/>
    <property type="evidence" value="ECO:0007669"/>
    <property type="project" value="UniProtKB-UniRule"/>
</dbReference>
<dbReference type="GO" id="GO:0003735">
    <property type="term" value="F:structural constituent of ribosome"/>
    <property type="evidence" value="ECO:0007669"/>
    <property type="project" value="InterPro"/>
</dbReference>
<dbReference type="GO" id="GO:0006412">
    <property type="term" value="P:translation"/>
    <property type="evidence" value="ECO:0007669"/>
    <property type="project" value="UniProtKB-UniRule"/>
</dbReference>
<dbReference type="CDD" id="cd00353">
    <property type="entry name" value="Ribosomal_S15p_S13e"/>
    <property type="match status" value="1"/>
</dbReference>
<dbReference type="FunFam" id="1.10.287.10:FF:000002">
    <property type="entry name" value="30S ribosomal protein S15"/>
    <property type="match status" value="1"/>
</dbReference>
<dbReference type="Gene3D" id="6.10.250.3130">
    <property type="match status" value="1"/>
</dbReference>
<dbReference type="Gene3D" id="1.10.287.10">
    <property type="entry name" value="S15/NS1, RNA-binding"/>
    <property type="match status" value="1"/>
</dbReference>
<dbReference type="HAMAP" id="MF_01343_B">
    <property type="entry name" value="Ribosomal_uS15_B"/>
    <property type="match status" value="1"/>
</dbReference>
<dbReference type="InterPro" id="IPR000589">
    <property type="entry name" value="Ribosomal_uS15"/>
</dbReference>
<dbReference type="InterPro" id="IPR005290">
    <property type="entry name" value="Ribosomal_uS15_bac-type"/>
</dbReference>
<dbReference type="InterPro" id="IPR009068">
    <property type="entry name" value="uS15_NS1_RNA-bd_sf"/>
</dbReference>
<dbReference type="NCBIfam" id="TIGR00952">
    <property type="entry name" value="S15_bact"/>
    <property type="match status" value="1"/>
</dbReference>
<dbReference type="PANTHER" id="PTHR23321">
    <property type="entry name" value="RIBOSOMAL PROTEIN S15, BACTERIAL AND ORGANELLAR"/>
    <property type="match status" value="1"/>
</dbReference>
<dbReference type="PANTHER" id="PTHR23321:SF26">
    <property type="entry name" value="SMALL RIBOSOMAL SUBUNIT PROTEIN US15M"/>
    <property type="match status" value="1"/>
</dbReference>
<dbReference type="Pfam" id="PF00312">
    <property type="entry name" value="Ribosomal_S15"/>
    <property type="match status" value="1"/>
</dbReference>
<dbReference type="SMART" id="SM01387">
    <property type="entry name" value="Ribosomal_S15"/>
    <property type="match status" value="1"/>
</dbReference>
<dbReference type="SUPFAM" id="SSF47060">
    <property type="entry name" value="S15/NS1 RNA-binding domain"/>
    <property type="match status" value="1"/>
</dbReference>
<dbReference type="PROSITE" id="PS00362">
    <property type="entry name" value="RIBOSOMAL_S15"/>
    <property type="match status" value="1"/>
</dbReference>
<name>RS15_DICT6</name>
<feature type="chain" id="PRO_1000143106" description="Small ribosomal subunit protein uS15">
    <location>
        <begin position="1"/>
        <end position="89"/>
    </location>
</feature>
<accession>B5YEA9</accession>
<comment type="function">
    <text evidence="1">One of the primary rRNA binding proteins, it binds directly to 16S rRNA where it helps nucleate assembly of the platform of the 30S subunit by binding and bridging several RNA helices of the 16S rRNA.</text>
</comment>
<comment type="function">
    <text evidence="1">Forms an intersubunit bridge (bridge B4) with the 23S rRNA of the 50S subunit in the ribosome.</text>
</comment>
<comment type="subunit">
    <text evidence="1">Part of the 30S ribosomal subunit. Forms a bridge to the 50S subunit in the 70S ribosome, contacting the 23S rRNA.</text>
</comment>
<comment type="similarity">
    <text evidence="1">Belongs to the universal ribosomal protein uS15 family.</text>
</comment>
<sequence length="89" mass="10774">MALTKEEKKQIIEKFRLNENDSGSPEVQIALLTERIKRLTEHLKVHKKDYHSRVGLLKMIGRRRKLLKYLQEKDFERYKKLIQELGLRK</sequence>
<organism>
    <name type="scientific">Dictyoglomus thermophilum (strain ATCC 35947 / DSM 3960 / H-6-12)</name>
    <dbReference type="NCBI Taxonomy" id="309799"/>
    <lineage>
        <taxon>Bacteria</taxon>
        <taxon>Pseudomonadati</taxon>
        <taxon>Dictyoglomota</taxon>
        <taxon>Dictyoglomia</taxon>
        <taxon>Dictyoglomales</taxon>
        <taxon>Dictyoglomaceae</taxon>
        <taxon>Dictyoglomus</taxon>
    </lineage>
</organism>
<keyword id="KW-0687">Ribonucleoprotein</keyword>
<keyword id="KW-0689">Ribosomal protein</keyword>
<keyword id="KW-0694">RNA-binding</keyword>
<keyword id="KW-0699">rRNA-binding</keyword>
<protein>
    <recommendedName>
        <fullName evidence="1">Small ribosomal subunit protein uS15</fullName>
    </recommendedName>
    <alternativeName>
        <fullName evidence="2">30S ribosomal protein S15</fullName>
    </alternativeName>
</protein>
<proteinExistence type="inferred from homology"/>
<reference key="1">
    <citation type="journal article" date="2014" name="Genome Announc.">
        <title>Complete Genome Sequence of the Extreme Thermophile Dictyoglomus thermophilum H-6-12.</title>
        <authorList>
            <person name="Coil D.A."/>
            <person name="Badger J.H."/>
            <person name="Forberger H.C."/>
            <person name="Riggs F."/>
            <person name="Madupu R."/>
            <person name="Fedorova N."/>
            <person name="Ward N."/>
            <person name="Robb F.T."/>
            <person name="Eisen J.A."/>
        </authorList>
    </citation>
    <scope>NUCLEOTIDE SEQUENCE [LARGE SCALE GENOMIC DNA]</scope>
    <source>
        <strain>ATCC 35947 / DSM 3960 / H-6-12</strain>
    </source>
</reference>